<organism>
    <name type="scientific">Erythrobacter litoralis (strain HTCC2594)</name>
    <dbReference type="NCBI Taxonomy" id="314225"/>
    <lineage>
        <taxon>Bacteria</taxon>
        <taxon>Pseudomonadati</taxon>
        <taxon>Pseudomonadota</taxon>
        <taxon>Alphaproteobacteria</taxon>
        <taxon>Sphingomonadales</taxon>
        <taxon>Erythrobacteraceae</taxon>
        <taxon>Erythrobacter/Porphyrobacter group</taxon>
        <taxon>Erythrobacter</taxon>
    </lineage>
</organism>
<reference key="1">
    <citation type="journal article" date="2009" name="J. Bacteriol.">
        <title>Complete genome sequence of Erythrobacter litoralis HTCC2594.</title>
        <authorList>
            <person name="Oh H.M."/>
            <person name="Giovannoni S.J."/>
            <person name="Ferriera S."/>
            <person name="Johnson J."/>
            <person name="Cho J.C."/>
        </authorList>
    </citation>
    <scope>NUCLEOTIDE SEQUENCE [LARGE SCALE GENOMIC DNA]</scope>
    <source>
        <strain>HTCC2594</strain>
    </source>
</reference>
<feature type="chain" id="PRO_1000056616" description="Ribosomal RNA small subunit methyltransferase A">
    <location>
        <begin position="1"/>
        <end position="281"/>
    </location>
</feature>
<feature type="binding site" evidence="1">
    <location>
        <position position="25"/>
    </location>
    <ligand>
        <name>S-adenosyl-L-methionine</name>
        <dbReference type="ChEBI" id="CHEBI:59789"/>
    </ligand>
</feature>
<feature type="binding site" evidence="1">
    <location>
        <position position="27"/>
    </location>
    <ligand>
        <name>S-adenosyl-L-methionine</name>
        <dbReference type="ChEBI" id="CHEBI:59789"/>
    </ligand>
</feature>
<feature type="binding site" evidence="1">
    <location>
        <position position="52"/>
    </location>
    <ligand>
        <name>S-adenosyl-L-methionine</name>
        <dbReference type="ChEBI" id="CHEBI:59789"/>
    </ligand>
</feature>
<feature type="binding site" evidence="1">
    <location>
        <position position="73"/>
    </location>
    <ligand>
        <name>S-adenosyl-L-methionine</name>
        <dbReference type="ChEBI" id="CHEBI:59789"/>
    </ligand>
</feature>
<feature type="binding site" evidence="1">
    <location>
        <position position="99"/>
    </location>
    <ligand>
        <name>S-adenosyl-L-methionine</name>
        <dbReference type="ChEBI" id="CHEBI:59789"/>
    </ligand>
</feature>
<feature type="binding site" evidence="1">
    <location>
        <position position="118"/>
    </location>
    <ligand>
        <name>S-adenosyl-L-methionine</name>
        <dbReference type="ChEBI" id="CHEBI:59789"/>
    </ligand>
</feature>
<gene>
    <name evidence="1" type="primary">rsmA</name>
    <name evidence="1" type="synonym">ksgA</name>
    <name type="ordered locus">ELI_08900</name>
</gene>
<accession>Q2N8W9</accession>
<dbReference type="EC" id="2.1.1.182" evidence="1"/>
<dbReference type="EMBL" id="CP000157">
    <property type="protein sequence ID" value="ABC63872.1"/>
    <property type="molecule type" value="Genomic_DNA"/>
</dbReference>
<dbReference type="RefSeq" id="WP_011414702.1">
    <property type="nucleotide sequence ID" value="NC_007722.1"/>
</dbReference>
<dbReference type="SMR" id="Q2N8W9"/>
<dbReference type="STRING" id="314225.ELI_08900"/>
<dbReference type="KEGG" id="eli:ELI_08900"/>
<dbReference type="eggNOG" id="COG0030">
    <property type="taxonomic scope" value="Bacteria"/>
</dbReference>
<dbReference type="HOGENOM" id="CLU_041220_0_1_5"/>
<dbReference type="OrthoDB" id="9814755at2"/>
<dbReference type="Proteomes" id="UP000008808">
    <property type="component" value="Chromosome"/>
</dbReference>
<dbReference type="GO" id="GO:0005829">
    <property type="term" value="C:cytosol"/>
    <property type="evidence" value="ECO:0007669"/>
    <property type="project" value="TreeGrafter"/>
</dbReference>
<dbReference type="GO" id="GO:0052908">
    <property type="term" value="F:16S rRNA (adenine(1518)-N(6)/adenine(1519)-N(6))-dimethyltransferase activity"/>
    <property type="evidence" value="ECO:0007669"/>
    <property type="project" value="UniProtKB-EC"/>
</dbReference>
<dbReference type="GO" id="GO:0003723">
    <property type="term" value="F:RNA binding"/>
    <property type="evidence" value="ECO:0007669"/>
    <property type="project" value="UniProtKB-KW"/>
</dbReference>
<dbReference type="CDD" id="cd02440">
    <property type="entry name" value="AdoMet_MTases"/>
    <property type="match status" value="1"/>
</dbReference>
<dbReference type="FunFam" id="1.10.8.100:FF:000001">
    <property type="entry name" value="Ribosomal RNA small subunit methyltransferase A"/>
    <property type="match status" value="1"/>
</dbReference>
<dbReference type="Gene3D" id="1.10.8.100">
    <property type="entry name" value="Ribosomal RNA adenine dimethylase-like, domain 2"/>
    <property type="match status" value="1"/>
</dbReference>
<dbReference type="Gene3D" id="3.40.50.150">
    <property type="entry name" value="Vaccinia Virus protein VP39"/>
    <property type="match status" value="1"/>
</dbReference>
<dbReference type="HAMAP" id="MF_00607">
    <property type="entry name" value="16SrRNA_methyltr_A"/>
    <property type="match status" value="1"/>
</dbReference>
<dbReference type="InterPro" id="IPR001737">
    <property type="entry name" value="KsgA/Erm"/>
</dbReference>
<dbReference type="InterPro" id="IPR023165">
    <property type="entry name" value="rRNA_Ade_diMease-like_C"/>
</dbReference>
<dbReference type="InterPro" id="IPR020596">
    <property type="entry name" value="rRNA_Ade_Mease_Trfase_CS"/>
</dbReference>
<dbReference type="InterPro" id="IPR020598">
    <property type="entry name" value="rRNA_Ade_methylase_Trfase_N"/>
</dbReference>
<dbReference type="InterPro" id="IPR011530">
    <property type="entry name" value="rRNA_adenine_dimethylase"/>
</dbReference>
<dbReference type="InterPro" id="IPR029063">
    <property type="entry name" value="SAM-dependent_MTases_sf"/>
</dbReference>
<dbReference type="NCBIfam" id="TIGR00755">
    <property type="entry name" value="ksgA"/>
    <property type="match status" value="1"/>
</dbReference>
<dbReference type="PANTHER" id="PTHR11727">
    <property type="entry name" value="DIMETHYLADENOSINE TRANSFERASE"/>
    <property type="match status" value="1"/>
</dbReference>
<dbReference type="PANTHER" id="PTHR11727:SF7">
    <property type="entry name" value="DIMETHYLADENOSINE TRANSFERASE-RELATED"/>
    <property type="match status" value="1"/>
</dbReference>
<dbReference type="Pfam" id="PF00398">
    <property type="entry name" value="RrnaAD"/>
    <property type="match status" value="1"/>
</dbReference>
<dbReference type="SMART" id="SM00650">
    <property type="entry name" value="rADc"/>
    <property type="match status" value="1"/>
</dbReference>
<dbReference type="SUPFAM" id="SSF53335">
    <property type="entry name" value="S-adenosyl-L-methionine-dependent methyltransferases"/>
    <property type="match status" value="1"/>
</dbReference>
<dbReference type="PROSITE" id="PS01131">
    <property type="entry name" value="RRNA_A_DIMETH"/>
    <property type="match status" value="1"/>
</dbReference>
<dbReference type="PROSITE" id="PS51689">
    <property type="entry name" value="SAM_RNA_A_N6_MT"/>
    <property type="match status" value="1"/>
</dbReference>
<sequence length="281" mass="30275">MPELPPLRDVIAKHGLSASKALGQNFLFDAQLLDRIAGIPGGLENRAVLEIGPGPGGLTRALLKAGARVTAIEMDRRCLPALAELSEVYPGKLSVIHGDAMKLDHAELMGEPFAVVANLPYNVGTALFVRWLGGETWPPQWTSLTLMFQQEVAQRIVSTPGTSAYGRLAVLAQWRSAASMPMKVHRSAFTPPPKVMSAIVHVTPDEMPEGVSARTLERLTEAAFGQRRKMLRQSLKGVPGAVETLAEVAIEETRRAETVTVEEFVALARRLGASRPSSNSG</sequence>
<evidence type="ECO:0000255" key="1">
    <source>
        <dbReference type="HAMAP-Rule" id="MF_00607"/>
    </source>
</evidence>
<comment type="function">
    <text evidence="1">Specifically dimethylates two adjacent adenosines (A1518 and A1519) in the loop of a conserved hairpin near the 3'-end of 16S rRNA in the 30S particle. May play a critical role in biogenesis of 30S subunits.</text>
</comment>
<comment type="catalytic activity">
    <reaction evidence="1">
        <text>adenosine(1518)/adenosine(1519) in 16S rRNA + 4 S-adenosyl-L-methionine = N(6)-dimethyladenosine(1518)/N(6)-dimethyladenosine(1519) in 16S rRNA + 4 S-adenosyl-L-homocysteine + 4 H(+)</text>
        <dbReference type="Rhea" id="RHEA:19609"/>
        <dbReference type="Rhea" id="RHEA-COMP:10232"/>
        <dbReference type="Rhea" id="RHEA-COMP:10233"/>
        <dbReference type="ChEBI" id="CHEBI:15378"/>
        <dbReference type="ChEBI" id="CHEBI:57856"/>
        <dbReference type="ChEBI" id="CHEBI:59789"/>
        <dbReference type="ChEBI" id="CHEBI:74411"/>
        <dbReference type="ChEBI" id="CHEBI:74493"/>
        <dbReference type="EC" id="2.1.1.182"/>
    </reaction>
</comment>
<comment type="subcellular location">
    <subcellularLocation>
        <location evidence="1">Cytoplasm</location>
    </subcellularLocation>
</comment>
<comment type="similarity">
    <text evidence="1">Belongs to the class I-like SAM-binding methyltransferase superfamily. rRNA adenine N(6)-methyltransferase family. RsmA subfamily.</text>
</comment>
<protein>
    <recommendedName>
        <fullName evidence="1">Ribosomal RNA small subunit methyltransferase A</fullName>
        <ecNumber evidence="1">2.1.1.182</ecNumber>
    </recommendedName>
    <alternativeName>
        <fullName evidence="1">16S rRNA (adenine(1518)-N(6)/adenine(1519)-N(6))-dimethyltransferase</fullName>
    </alternativeName>
    <alternativeName>
        <fullName evidence="1">16S rRNA dimethyladenosine transferase</fullName>
    </alternativeName>
    <alternativeName>
        <fullName evidence="1">16S rRNA dimethylase</fullName>
    </alternativeName>
    <alternativeName>
        <fullName evidence="1">S-adenosylmethionine-6-N', N'-adenosyl(rRNA) dimethyltransferase</fullName>
    </alternativeName>
</protein>
<proteinExistence type="inferred from homology"/>
<name>RSMA_ERYLH</name>
<keyword id="KW-0963">Cytoplasm</keyword>
<keyword id="KW-0489">Methyltransferase</keyword>
<keyword id="KW-1185">Reference proteome</keyword>
<keyword id="KW-0694">RNA-binding</keyword>
<keyword id="KW-0698">rRNA processing</keyword>
<keyword id="KW-0949">S-adenosyl-L-methionine</keyword>
<keyword id="KW-0808">Transferase</keyword>